<gene>
    <name type="primary">nuoG2</name>
    <name type="ordered locus">RA0828</name>
    <name type="ORF">SMa1523</name>
</gene>
<name>NUOG2_RHIME</name>
<sequence>MIKVTIDEQSLEVEAGSTVLAAAERLGIEIPTFCYWKRLPPLASCRMCLVEIEGLRRLQPACATVAADGMVVRTNTPLIEETRSSMLDMLLANHPLDCPICDKGGECELQDMVMAYGPGESRFRDPKRVFHSKDIRLSPVIIMNVNRCIQCQRCVRMCEEVVGAVALGTVEKGMDTAVTGFEGSLASCDQCGNCVEVCPVGALMSFPYRYKARPWDLAETDTICPHCGTGCQLTVGARKGEFMRVRSDWEHGVNRETLCVRGRFGLDFIESRDRIKRPMIRRDGTLTPVSWEEAGDFLRQRLGVAEGKAAGGLISPRLPNEVLYQFQKLMRTVLRTNNVDCSSRWSAPLDILVPIVASFYSRDPLEQVIGKDCVLIIGGNVTEENPVTEYLLRDAARRRHTRLLMLSARPSRLDADARAVLRAHPGGEGQSLAAVVAALVAVTDEGLPDDIFAKTSGTTASSGANDALDRLVSTLKEGRSVTLLVSVDLLRSPLARKTLEQLGNLLQLLRLLGKEPSLQFLFDRANQMGAWDMGVLPGVLPGLSPIADEATRTRFERSWGAEIPREPGADVDAMLELCEKGGMGVLYVVGSDPLISYPDREFVERALGAANLLIVQDAFLTDTAGLADVVLPAAGYGEESGTFTNNEGRTQALRKFREPAFDARSNLAIFGFIAALRERPLQPSTETVIFEEMTRLVPAYEGLTWEGLGADGAFTTSAPKPWTSGFFAPLSAPAVTDVLQLITGNCLFHNGYVSEHSETLNSVADDPFIEMSAQDAAGLSLSDGDQVLVRSARGELTAKLKVNRRFPHGLVFVPENYRALRLNSLMRRGEYPCPVEIRECAKRAASALDEERV</sequence>
<proteinExistence type="inferred from homology"/>
<keyword id="KW-0001">2Fe-2S</keyword>
<keyword id="KW-0004">4Fe-4S</keyword>
<keyword id="KW-0408">Iron</keyword>
<keyword id="KW-0411">Iron-sulfur</keyword>
<keyword id="KW-0479">Metal-binding</keyword>
<keyword id="KW-0520">NAD</keyword>
<keyword id="KW-0614">Plasmid</keyword>
<keyword id="KW-0874">Quinone</keyword>
<keyword id="KW-1185">Reference proteome</keyword>
<keyword id="KW-0677">Repeat</keyword>
<keyword id="KW-1278">Translocase</keyword>
<keyword id="KW-0830">Ubiquinone</keyword>
<comment type="function">
    <text evidence="1">NDH-1 shuttles electrons from NADH, via FMN and iron-sulfur (Fe-S) centers, to quinones in the respiratory chain. The immediate electron acceptor for the enzyme in this species is believed to be ubiquinone. Couples the redox reaction to proton translocation (for every two electrons transferred, four hydrogen ions are translocated across the cytoplasmic membrane), and thus conserves the redox energy in a proton gradient (By similarity).</text>
</comment>
<comment type="catalytic activity">
    <reaction>
        <text>a quinone + NADH + 5 H(+)(in) = a quinol + NAD(+) + 4 H(+)(out)</text>
        <dbReference type="Rhea" id="RHEA:57888"/>
        <dbReference type="ChEBI" id="CHEBI:15378"/>
        <dbReference type="ChEBI" id="CHEBI:24646"/>
        <dbReference type="ChEBI" id="CHEBI:57540"/>
        <dbReference type="ChEBI" id="CHEBI:57945"/>
        <dbReference type="ChEBI" id="CHEBI:132124"/>
    </reaction>
</comment>
<comment type="cofactor">
    <cofactor evidence="1">
        <name>[2Fe-2S] cluster</name>
        <dbReference type="ChEBI" id="CHEBI:190135"/>
    </cofactor>
    <text evidence="1">Binds 1 [2Fe-2S] cluster per subunit.</text>
</comment>
<comment type="cofactor">
    <cofactor evidence="1">
        <name>[4Fe-4S] cluster</name>
        <dbReference type="ChEBI" id="CHEBI:49883"/>
    </cofactor>
    <text evidence="1">Binds 3 [4Fe-4S] clusters per subunit.</text>
</comment>
<comment type="similarity">
    <text evidence="7">Belongs to the complex I 75 kDa subunit family.</text>
</comment>
<organism>
    <name type="scientific">Rhizobium meliloti (strain 1021)</name>
    <name type="common">Ensifer meliloti</name>
    <name type="synonym">Sinorhizobium meliloti</name>
    <dbReference type="NCBI Taxonomy" id="266834"/>
    <lineage>
        <taxon>Bacteria</taxon>
        <taxon>Pseudomonadati</taxon>
        <taxon>Pseudomonadota</taxon>
        <taxon>Alphaproteobacteria</taxon>
        <taxon>Hyphomicrobiales</taxon>
        <taxon>Rhizobiaceae</taxon>
        <taxon>Sinorhizobium/Ensifer group</taxon>
        <taxon>Sinorhizobium</taxon>
    </lineage>
</organism>
<accession>P56914</accession>
<dbReference type="EC" id="7.1.1.-"/>
<dbReference type="EMBL" id="AJ245399">
    <property type="protein sequence ID" value="CAB51635.1"/>
    <property type="molecule type" value="Genomic_DNA"/>
</dbReference>
<dbReference type="EMBL" id="AE006469">
    <property type="protein sequence ID" value="AAK65486.1"/>
    <property type="molecule type" value="Genomic_DNA"/>
</dbReference>
<dbReference type="PIR" id="D95365">
    <property type="entry name" value="D95365"/>
</dbReference>
<dbReference type="RefSeq" id="NP_436074.1">
    <property type="nucleotide sequence ID" value="NC_003037.1"/>
</dbReference>
<dbReference type="SMR" id="P56914"/>
<dbReference type="EnsemblBacteria" id="AAK65486">
    <property type="protein sequence ID" value="AAK65486"/>
    <property type="gene ID" value="SMa1523"/>
</dbReference>
<dbReference type="KEGG" id="sme:SMa1523"/>
<dbReference type="PATRIC" id="fig|266834.11.peg.859"/>
<dbReference type="HOGENOM" id="CLU_000422_11_6_5"/>
<dbReference type="OrthoDB" id="9810782at2"/>
<dbReference type="Proteomes" id="UP000001976">
    <property type="component" value="Plasmid pSymA"/>
</dbReference>
<dbReference type="GO" id="GO:0016020">
    <property type="term" value="C:membrane"/>
    <property type="evidence" value="ECO:0007669"/>
    <property type="project" value="InterPro"/>
</dbReference>
<dbReference type="GO" id="GO:1990204">
    <property type="term" value="C:oxidoreductase complex"/>
    <property type="evidence" value="ECO:0007669"/>
    <property type="project" value="UniProtKB-ARBA"/>
</dbReference>
<dbReference type="GO" id="GO:0051537">
    <property type="term" value="F:2 iron, 2 sulfur cluster binding"/>
    <property type="evidence" value="ECO:0007669"/>
    <property type="project" value="UniProtKB-KW"/>
</dbReference>
<dbReference type="GO" id="GO:0051539">
    <property type="term" value="F:4 iron, 4 sulfur cluster binding"/>
    <property type="evidence" value="ECO:0007669"/>
    <property type="project" value="UniProtKB-KW"/>
</dbReference>
<dbReference type="GO" id="GO:0046872">
    <property type="term" value="F:metal ion binding"/>
    <property type="evidence" value="ECO:0007669"/>
    <property type="project" value="UniProtKB-KW"/>
</dbReference>
<dbReference type="GO" id="GO:0043546">
    <property type="term" value="F:molybdopterin cofactor binding"/>
    <property type="evidence" value="ECO:0007669"/>
    <property type="project" value="InterPro"/>
</dbReference>
<dbReference type="GO" id="GO:0008137">
    <property type="term" value="F:NADH dehydrogenase (ubiquinone) activity"/>
    <property type="evidence" value="ECO:0007669"/>
    <property type="project" value="InterPro"/>
</dbReference>
<dbReference type="GO" id="GO:0048038">
    <property type="term" value="F:quinone binding"/>
    <property type="evidence" value="ECO:0007669"/>
    <property type="project" value="UniProtKB-KW"/>
</dbReference>
<dbReference type="GO" id="GO:0042773">
    <property type="term" value="P:ATP synthesis coupled electron transport"/>
    <property type="evidence" value="ECO:0007669"/>
    <property type="project" value="InterPro"/>
</dbReference>
<dbReference type="CDD" id="cd00207">
    <property type="entry name" value="fer2"/>
    <property type="match status" value="1"/>
</dbReference>
<dbReference type="CDD" id="cd02771">
    <property type="entry name" value="MopB_NDH-1_NuoG2-N7"/>
    <property type="match status" value="1"/>
</dbReference>
<dbReference type="FunFam" id="3.30.70.20:FF:000035">
    <property type="entry name" value="Iron hydrogenase 1"/>
    <property type="match status" value="1"/>
</dbReference>
<dbReference type="FunFam" id="3.10.20.740:FF:000001">
    <property type="entry name" value="NADH-quinone oxidoreductase subunit G"/>
    <property type="match status" value="1"/>
</dbReference>
<dbReference type="Gene3D" id="2.40.40.20">
    <property type="match status" value="1"/>
</dbReference>
<dbReference type="Gene3D" id="3.10.20.740">
    <property type="match status" value="1"/>
</dbReference>
<dbReference type="Gene3D" id="3.30.70.20">
    <property type="match status" value="1"/>
</dbReference>
<dbReference type="Gene3D" id="3.40.50.740">
    <property type="match status" value="2"/>
</dbReference>
<dbReference type="Gene3D" id="2.20.25.90">
    <property type="entry name" value="ADC-like domains"/>
    <property type="match status" value="1"/>
</dbReference>
<dbReference type="Gene3D" id="3.40.228.10">
    <property type="entry name" value="Dimethylsulfoxide Reductase, domain 2"/>
    <property type="match status" value="1"/>
</dbReference>
<dbReference type="InterPro" id="IPR036010">
    <property type="entry name" value="2Fe-2S_ferredoxin-like_sf"/>
</dbReference>
<dbReference type="InterPro" id="IPR001041">
    <property type="entry name" value="2Fe-2S_ferredoxin-type"/>
</dbReference>
<dbReference type="InterPro" id="IPR017896">
    <property type="entry name" value="4Fe4S_Fe-S-bd"/>
</dbReference>
<dbReference type="InterPro" id="IPR017900">
    <property type="entry name" value="4Fe4S_Fe_S_CS"/>
</dbReference>
<dbReference type="InterPro" id="IPR009010">
    <property type="entry name" value="Asp_de-COase-like_dom_sf"/>
</dbReference>
<dbReference type="InterPro" id="IPR006657">
    <property type="entry name" value="MoPterin_dinucl-bd_dom"/>
</dbReference>
<dbReference type="InterPro" id="IPR006656">
    <property type="entry name" value="Mopterin_OxRdtase"/>
</dbReference>
<dbReference type="InterPro" id="IPR006963">
    <property type="entry name" value="Mopterin_OxRdtase_4Fe-4S_dom"/>
</dbReference>
<dbReference type="InterPro" id="IPR027467">
    <property type="entry name" value="MopterinOxRdtase_cofactor_BS"/>
</dbReference>
<dbReference type="InterPro" id="IPR000283">
    <property type="entry name" value="NADH_UbQ_OxRdtase_75kDa_su_CS"/>
</dbReference>
<dbReference type="InterPro" id="IPR054351">
    <property type="entry name" value="NADH_UbQ_OxRdtase_ferredoxin"/>
</dbReference>
<dbReference type="InterPro" id="IPR010228">
    <property type="entry name" value="NADH_UbQ_OxRdtase_Gsu"/>
</dbReference>
<dbReference type="InterPro" id="IPR019574">
    <property type="entry name" value="NADH_UbQ_OxRdtase_Gsu_4Fe4S-bd"/>
</dbReference>
<dbReference type="InterPro" id="IPR050123">
    <property type="entry name" value="Prok_molybdopt-oxidoreductase"/>
</dbReference>
<dbReference type="NCBIfam" id="TIGR01973">
    <property type="entry name" value="NuoG"/>
    <property type="match status" value="1"/>
</dbReference>
<dbReference type="PANTHER" id="PTHR43105:SF10">
    <property type="entry name" value="NADH-QUINONE OXIDOREDUCTASE SUBUNIT G"/>
    <property type="match status" value="1"/>
</dbReference>
<dbReference type="PANTHER" id="PTHR43105">
    <property type="entry name" value="RESPIRATORY NITRATE REDUCTASE"/>
    <property type="match status" value="1"/>
</dbReference>
<dbReference type="Pfam" id="PF13510">
    <property type="entry name" value="Fer2_4"/>
    <property type="match status" value="1"/>
</dbReference>
<dbReference type="Pfam" id="PF22117">
    <property type="entry name" value="Fer4_Nqo3"/>
    <property type="match status" value="1"/>
</dbReference>
<dbReference type="Pfam" id="PF04879">
    <property type="entry name" value="Molybdop_Fe4S4"/>
    <property type="match status" value="1"/>
</dbReference>
<dbReference type="Pfam" id="PF00384">
    <property type="entry name" value="Molybdopterin"/>
    <property type="match status" value="1"/>
</dbReference>
<dbReference type="Pfam" id="PF01568">
    <property type="entry name" value="Molydop_binding"/>
    <property type="match status" value="1"/>
</dbReference>
<dbReference type="Pfam" id="PF10588">
    <property type="entry name" value="NADH-G_4Fe-4S_3"/>
    <property type="match status" value="1"/>
</dbReference>
<dbReference type="SMART" id="SM00926">
    <property type="entry name" value="Molybdop_Fe4S4"/>
    <property type="match status" value="1"/>
</dbReference>
<dbReference type="SMART" id="SM00929">
    <property type="entry name" value="NADH-G_4Fe-4S_3"/>
    <property type="match status" value="1"/>
</dbReference>
<dbReference type="SUPFAM" id="SSF54292">
    <property type="entry name" value="2Fe-2S ferredoxin-like"/>
    <property type="match status" value="1"/>
</dbReference>
<dbReference type="SUPFAM" id="SSF54862">
    <property type="entry name" value="4Fe-4S ferredoxins"/>
    <property type="match status" value="1"/>
</dbReference>
<dbReference type="SUPFAM" id="SSF50692">
    <property type="entry name" value="ADC-like"/>
    <property type="match status" value="1"/>
</dbReference>
<dbReference type="SUPFAM" id="SSF53706">
    <property type="entry name" value="Formate dehydrogenase/DMSO reductase, domains 1-3"/>
    <property type="match status" value="1"/>
</dbReference>
<dbReference type="PROSITE" id="PS51085">
    <property type="entry name" value="2FE2S_FER_2"/>
    <property type="match status" value="1"/>
</dbReference>
<dbReference type="PROSITE" id="PS00198">
    <property type="entry name" value="4FE4S_FER_1"/>
    <property type="match status" value="2"/>
</dbReference>
<dbReference type="PROSITE" id="PS51379">
    <property type="entry name" value="4FE4S_FER_2"/>
    <property type="match status" value="2"/>
</dbReference>
<dbReference type="PROSITE" id="PS51839">
    <property type="entry name" value="4FE4S_HC3"/>
    <property type="match status" value="1"/>
</dbReference>
<dbReference type="PROSITE" id="PS51669">
    <property type="entry name" value="4FE4S_MOW_BIS_MGD"/>
    <property type="match status" value="1"/>
</dbReference>
<dbReference type="PROSITE" id="PS00641">
    <property type="entry name" value="COMPLEX1_75K_1"/>
    <property type="match status" value="1"/>
</dbReference>
<dbReference type="PROSITE" id="PS00642">
    <property type="entry name" value="COMPLEX1_75K_2"/>
    <property type="match status" value="1"/>
</dbReference>
<dbReference type="PROSITE" id="PS00643">
    <property type="entry name" value="COMPLEX1_75K_3"/>
    <property type="match status" value="1"/>
</dbReference>
<geneLocation type="plasmid">
    <name>pSymA</name>
    <name>megaplasmid 1</name>
</geneLocation>
<feature type="chain" id="PRO_0000118560" description="NADH-quinone oxidoreductase subunit G 2">
    <location>
        <begin position="1"/>
        <end position="853"/>
    </location>
</feature>
<feature type="domain" description="2Fe-2S ferredoxin-type" evidence="3">
    <location>
        <begin position="1"/>
        <end position="78"/>
    </location>
</feature>
<feature type="domain" description="4Fe-4S His(Cys)3-ligated-type" evidence="6">
    <location>
        <begin position="78"/>
        <end position="117"/>
    </location>
</feature>
<feature type="domain" description="4Fe-4S ferredoxin-type 1" evidence="4">
    <location>
        <begin position="139"/>
        <end position="170"/>
    </location>
</feature>
<feature type="domain" description="4Fe-4S ferredoxin-type 2" evidence="4">
    <location>
        <begin position="179"/>
        <end position="209"/>
    </location>
</feature>
<feature type="domain" description="4Fe-4S Mo/W bis-MGD-type" evidence="5">
    <location>
        <begin position="217"/>
        <end position="273"/>
    </location>
</feature>
<feature type="binding site" evidence="1">
    <location>
        <position position="34"/>
    </location>
    <ligand>
        <name>[2Fe-2S] cluster</name>
        <dbReference type="ChEBI" id="CHEBI:190135"/>
    </ligand>
</feature>
<feature type="binding site" evidence="1">
    <location>
        <position position="45"/>
    </location>
    <ligand>
        <name>[2Fe-2S] cluster</name>
        <dbReference type="ChEBI" id="CHEBI:190135"/>
    </ligand>
</feature>
<feature type="binding site" evidence="1">
    <location>
        <position position="48"/>
    </location>
    <ligand>
        <name>[2Fe-2S] cluster</name>
        <dbReference type="ChEBI" id="CHEBI:190135"/>
    </ligand>
</feature>
<feature type="binding site" evidence="1">
    <location>
        <position position="62"/>
    </location>
    <ligand>
        <name>[2Fe-2S] cluster</name>
        <dbReference type="ChEBI" id="CHEBI:190135"/>
    </ligand>
</feature>
<feature type="binding site" evidence="6">
    <location>
        <position position="94"/>
    </location>
    <ligand>
        <name>[4Fe-4S] cluster</name>
        <dbReference type="ChEBI" id="CHEBI:49883"/>
        <label>1</label>
    </ligand>
</feature>
<feature type="binding site" evidence="6">
    <location>
        <position position="98"/>
    </location>
    <ligand>
        <name>[4Fe-4S] cluster</name>
        <dbReference type="ChEBI" id="CHEBI:49883"/>
        <label>1</label>
    </ligand>
</feature>
<feature type="binding site" evidence="6">
    <location>
        <position position="101"/>
    </location>
    <ligand>
        <name>[4Fe-4S] cluster</name>
        <dbReference type="ChEBI" id="CHEBI:49883"/>
        <label>1</label>
    </ligand>
</feature>
<feature type="binding site" evidence="6">
    <location>
        <position position="107"/>
    </location>
    <ligand>
        <name>[4Fe-4S] cluster</name>
        <dbReference type="ChEBI" id="CHEBI:49883"/>
        <label>1</label>
    </ligand>
</feature>
<feature type="binding site" evidence="1">
    <location>
        <position position="148"/>
    </location>
    <ligand>
        <name>[4Fe-4S] cluster</name>
        <dbReference type="ChEBI" id="CHEBI:49883"/>
        <label>2</label>
    </ligand>
</feature>
<feature type="binding site" evidence="1">
    <location>
        <position position="151"/>
    </location>
    <ligand>
        <name>[4Fe-4S] cluster</name>
        <dbReference type="ChEBI" id="CHEBI:49883"/>
        <label>2</label>
    </ligand>
</feature>
<feature type="binding site" evidence="1">
    <location>
        <position position="154"/>
    </location>
    <ligand>
        <name>[4Fe-4S] cluster</name>
        <dbReference type="ChEBI" id="CHEBI:49883"/>
        <label>2</label>
    </ligand>
</feature>
<feature type="binding site" evidence="1">
    <location>
        <position position="198"/>
    </location>
    <ligand>
        <name>[4Fe-4S] cluster</name>
        <dbReference type="ChEBI" id="CHEBI:49883"/>
        <label>2</label>
    </ligand>
</feature>
<feature type="binding site" evidence="2">
    <location>
        <position position="224"/>
    </location>
    <ligand>
        <name>[4Fe-4S] cluster</name>
        <dbReference type="ChEBI" id="CHEBI:49883"/>
        <label>3</label>
    </ligand>
</feature>
<feature type="binding site" evidence="2">
    <location>
        <position position="227"/>
    </location>
    <ligand>
        <name>[4Fe-4S] cluster</name>
        <dbReference type="ChEBI" id="CHEBI:49883"/>
        <label>3</label>
    </ligand>
</feature>
<feature type="binding site" evidence="2">
    <location>
        <position position="231"/>
    </location>
    <ligand>
        <name>[4Fe-4S] cluster</name>
        <dbReference type="ChEBI" id="CHEBI:49883"/>
        <label>3</label>
    </ligand>
</feature>
<feature type="binding site" evidence="2">
    <location>
        <position position="259"/>
    </location>
    <ligand>
        <name>[4Fe-4S] cluster</name>
        <dbReference type="ChEBI" id="CHEBI:49883"/>
        <label>3</label>
    </ligand>
</feature>
<feature type="sequence conflict" description="In Ref. 1; CAB51635." evidence="7" ref="1">
    <original>K</original>
    <variation>R</variation>
    <location>
        <position position="211"/>
    </location>
</feature>
<feature type="sequence conflict" description="In Ref. 1; CAB51635." evidence="7" ref="1">
    <original>T</original>
    <variation>A</variation>
    <location>
        <position position="285"/>
    </location>
</feature>
<feature type="sequence conflict" description="In Ref. 1; CAB51635." evidence="7" ref="1">
    <original>F</original>
    <variation>L</variation>
    <location>
        <position position="452"/>
    </location>
</feature>
<feature type="sequence conflict" description="In Ref. 1; CAB51635." evidence="7" ref="1">
    <original>T</original>
    <variation>I</variation>
    <location>
        <position position="459"/>
    </location>
</feature>
<feature type="sequence conflict" description="In Ref. 1; CAB51635." evidence="7" ref="1">
    <original>S</original>
    <variation>G</variation>
    <location>
        <position position="544"/>
    </location>
</feature>
<feature type="sequence conflict" description="In Ref. 1; CAB51635." evidence="7" ref="1">
    <original>R</original>
    <variation>K</variation>
    <location>
        <position position="554"/>
    </location>
</feature>
<feature type="sequence conflict" description="In Ref. 1; CAB51635." evidence="7" ref="1">
    <original>R</original>
    <variation>Q</variation>
    <location>
        <position position="679"/>
    </location>
</feature>
<feature type="sequence conflict" description="In Ref. 1; CAB51635." evidence="7" ref="1">
    <original>A</original>
    <variation>G</variation>
    <location>
        <position position="734"/>
    </location>
</feature>
<feature type="sequence conflict" description="In Ref. 1; CAB51635." evidence="7" ref="1">
    <original>H</original>
    <variation>R</variation>
    <location>
        <position position="756"/>
    </location>
</feature>
<evidence type="ECO:0000250" key="1"/>
<evidence type="ECO:0000255" key="2"/>
<evidence type="ECO:0000255" key="3">
    <source>
        <dbReference type="PROSITE-ProRule" id="PRU00465"/>
    </source>
</evidence>
<evidence type="ECO:0000255" key="4">
    <source>
        <dbReference type="PROSITE-ProRule" id="PRU00711"/>
    </source>
</evidence>
<evidence type="ECO:0000255" key="5">
    <source>
        <dbReference type="PROSITE-ProRule" id="PRU01004"/>
    </source>
</evidence>
<evidence type="ECO:0000255" key="6">
    <source>
        <dbReference type="PROSITE-ProRule" id="PRU01184"/>
    </source>
</evidence>
<evidence type="ECO:0000305" key="7"/>
<protein>
    <recommendedName>
        <fullName>NADH-quinone oxidoreductase subunit G 2</fullName>
        <ecNumber>7.1.1.-</ecNumber>
    </recommendedName>
    <alternativeName>
        <fullName>NADH dehydrogenase I subunit G 2</fullName>
    </alternativeName>
    <alternativeName>
        <fullName>NDH-1 subunit G 2</fullName>
    </alternativeName>
</protein>
<reference key="1">
    <citation type="submission" date="1999-07" db="EMBL/GenBank/DDBJ databases">
        <title>Rhizobium meliloti carries two sets of nuo genes.</title>
        <authorList>
            <person name="Putnoky P."/>
            <person name="Jady B."/>
            <person name="Chellapilla K.P."/>
            <person name="Barta F."/>
            <person name="Kiss E."/>
        </authorList>
    </citation>
    <scope>NUCLEOTIDE SEQUENCE [GENOMIC DNA]</scope>
    <source>
        <strain>41</strain>
    </source>
</reference>
<reference key="2">
    <citation type="journal article" date="2001" name="Proc. Natl. Acad. Sci. U.S.A.">
        <title>Nucleotide sequence and predicted functions of the entire Sinorhizobium meliloti pSymA megaplasmid.</title>
        <authorList>
            <person name="Barnett M.J."/>
            <person name="Fisher R.F."/>
            <person name="Jones T."/>
            <person name="Komp C."/>
            <person name="Abola A.P."/>
            <person name="Barloy-Hubler F."/>
            <person name="Bowser L."/>
            <person name="Capela D."/>
            <person name="Galibert F."/>
            <person name="Gouzy J."/>
            <person name="Gurjal M."/>
            <person name="Hong A."/>
            <person name="Huizar L."/>
            <person name="Hyman R.W."/>
            <person name="Kahn D."/>
            <person name="Kahn M.L."/>
            <person name="Kalman S."/>
            <person name="Keating D.H."/>
            <person name="Palm C."/>
            <person name="Peck M.C."/>
            <person name="Surzycki R."/>
            <person name="Wells D.H."/>
            <person name="Yeh K.-C."/>
            <person name="Davis R.W."/>
            <person name="Federspiel N.A."/>
            <person name="Long S.R."/>
        </authorList>
    </citation>
    <scope>NUCLEOTIDE SEQUENCE [LARGE SCALE GENOMIC DNA]</scope>
    <source>
        <strain>1021</strain>
    </source>
</reference>
<reference key="3">
    <citation type="journal article" date="2001" name="Science">
        <title>The composite genome of the legume symbiont Sinorhizobium meliloti.</title>
        <authorList>
            <person name="Galibert F."/>
            <person name="Finan T.M."/>
            <person name="Long S.R."/>
            <person name="Puehler A."/>
            <person name="Abola P."/>
            <person name="Ampe F."/>
            <person name="Barloy-Hubler F."/>
            <person name="Barnett M.J."/>
            <person name="Becker A."/>
            <person name="Boistard P."/>
            <person name="Bothe G."/>
            <person name="Boutry M."/>
            <person name="Bowser L."/>
            <person name="Buhrmester J."/>
            <person name="Cadieu E."/>
            <person name="Capela D."/>
            <person name="Chain P."/>
            <person name="Cowie A."/>
            <person name="Davis R.W."/>
            <person name="Dreano S."/>
            <person name="Federspiel N.A."/>
            <person name="Fisher R.F."/>
            <person name="Gloux S."/>
            <person name="Godrie T."/>
            <person name="Goffeau A."/>
            <person name="Golding B."/>
            <person name="Gouzy J."/>
            <person name="Gurjal M."/>
            <person name="Hernandez-Lucas I."/>
            <person name="Hong A."/>
            <person name="Huizar L."/>
            <person name="Hyman R.W."/>
            <person name="Jones T."/>
            <person name="Kahn D."/>
            <person name="Kahn M.L."/>
            <person name="Kalman S."/>
            <person name="Keating D.H."/>
            <person name="Kiss E."/>
            <person name="Komp C."/>
            <person name="Lelaure V."/>
            <person name="Masuy D."/>
            <person name="Palm C."/>
            <person name="Peck M.C."/>
            <person name="Pohl T.M."/>
            <person name="Portetelle D."/>
            <person name="Purnelle B."/>
            <person name="Ramsperger U."/>
            <person name="Surzycki R."/>
            <person name="Thebault P."/>
            <person name="Vandenbol M."/>
            <person name="Vorhoelter F.J."/>
            <person name="Weidner S."/>
            <person name="Wells D.H."/>
            <person name="Wong K."/>
            <person name="Yeh K.-C."/>
            <person name="Batut J."/>
        </authorList>
    </citation>
    <scope>NUCLEOTIDE SEQUENCE [LARGE SCALE GENOMIC DNA]</scope>
    <source>
        <strain>1021</strain>
    </source>
</reference>